<sequence>MQEVKQWPVKIMLVHPKAPFLKGEKIVIAADCAVLVNRDIRDRFESDAVIIGCPMLEDPRRMFERIKMIVAESDAKLEVYTMEVPCCHALHLMVEKAKEEHGKQTESEKYIVRVSGAVEPYSKKIDESMIEAERRAHRGH</sequence>
<gene>
    <name type="ordered locus">AF_0155</name>
</gene>
<organism>
    <name type="scientific">Archaeoglobus fulgidus (strain ATCC 49558 / DSM 4304 / JCM 9628 / NBRC 100126 / VC-16)</name>
    <dbReference type="NCBI Taxonomy" id="224325"/>
    <lineage>
        <taxon>Archaea</taxon>
        <taxon>Methanobacteriati</taxon>
        <taxon>Methanobacteriota</taxon>
        <taxon>Archaeoglobi</taxon>
        <taxon>Archaeoglobales</taxon>
        <taxon>Archaeoglobaceae</taxon>
        <taxon>Archaeoglobus</taxon>
    </lineage>
</organism>
<name>Y155_ARCFU</name>
<keyword id="KW-1185">Reference proteome</keyword>
<protein>
    <recommendedName>
        <fullName>Uncharacterized protein AF_0155</fullName>
    </recommendedName>
</protein>
<feature type="chain" id="PRO_0000127842" description="Uncharacterized protein AF_0155">
    <location>
        <begin position="1"/>
        <end position="140"/>
    </location>
</feature>
<reference key="1">
    <citation type="journal article" date="1997" name="Nature">
        <title>The complete genome sequence of the hyperthermophilic, sulphate-reducing archaeon Archaeoglobus fulgidus.</title>
        <authorList>
            <person name="Klenk H.-P."/>
            <person name="Clayton R.A."/>
            <person name="Tomb J.-F."/>
            <person name="White O."/>
            <person name="Nelson K.E."/>
            <person name="Ketchum K.A."/>
            <person name="Dodson R.J."/>
            <person name="Gwinn M.L."/>
            <person name="Hickey E.K."/>
            <person name="Peterson J.D."/>
            <person name="Richardson D.L."/>
            <person name="Kerlavage A.R."/>
            <person name="Graham D.E."/>
            <person name="Kyrpides N.C."/>
            <person name="Fleischmann R.D."/>
            <person name="Quackenbush J."/>
            <person name="Lee N.H."/>
            <person name="Sutton G.G."/>
            <person name="Gill S.R."/>
            <person name="Kirkness E.F."/>
            <person name="Dougherty B.A."/>
            <person name="McKenney K."/>
            <person name="Adams M.D."/>
            <person name="Loftus B.J."/>
            <person name="Peterson S.N."/>
            <person name="Reich C.I."/>
            <person name="McNeil L.K."/>
            <person name="Badger J.H."/>
            <person name="Glodek A."/>
            <person name="Zhou L."/>
            <person name="Overbeek R."/>
            <person name="Gocayne J.D."/>
            <person name="Weidman J.F."/>
            <person name="McDonald L.A."/>
            <person name="Utterback T.R."/>
            <person name="Cotton M.D."/>
            <person name="Spriggs T."/>
            <person name="Artiach P."/>
            <person name="Kaine B.P."/>
            <person name="Sykes S.M."/>
            <person name="Sadow P.W."/>
            <person name="D'Andrea K.P."/>
            <person name="Bowman C."/>
            <person name="Fujii C."/>
            <person name="Garland S.A."/>
            <person name="Mason T.M."/>
            <person name="Olsen G.J."/>
            <person name="Fraser C.M."/>
            <person name="Smith H.O."/>
            <person name="Woese C.R."/>
            <person name="Venter J.C."/>
        </authorList>
    </citation>
    <scope>NUCLEOTIDE SEQUENCE [LARGE SCALE GENOMIC DNA]</scope>
    <source>
        <strain>ATCC 49558 / DSM 4304 / JCM 9628 / NBRC 100126 / VC-16</strain>
    </source>
</reference>
<dbReference type="EMBL" id="AE000782">
    <property type="protein sequence ID" value="AAB91077.1"/>
    <property type="molecule type" value="Genomic_DNA"/>
</dbReference>
<dbReference type="PIR" id="C69269">
    <property type="entry name" value="C69269"/>
</dbReference>
<dbReference type="RefSeq" id="WP_010877667.1">
    <property type="nucleotide sequence ID" value="NC_000917.1"/>
</dbReference>
<dbReference type="STRING" id="224325.AF_0155"/>
<dbReference type="PaxDb" id="224325-AF_0155"/>
<dbReference type="EnsemblBacteria" id="AAB91077">
    <property type="protein sequence ID" value="AAB91077"/>
    <property type="gene ID" value="AF_0155"/>
</dbReference>
<dbReference type="KEGG" id="afu:AF_0155"/>
<dbReference type="eggNOG" id="arCOG00296">
    <property type="taxonomic scope" value="Archaea"/>
</dbReference>
<dbReference type="HOGENOM" id="CLU_1830484_0_0_2"/>
<dbReference type="OrthoDB" id="51307at2157"/>
<dbReference type="PhylomeDB" id="O30082"/>
<dbReference type="Proteomes" id="UP000002199">
    <property type="component" value="Chromosome"/>
</dbReference>
<accession>O30082</accession>
<proteinExistence type="predicted"/>